<dbReference type="EC" id="2.1.2.11" evidence="1"/>
<dbReference type="EMBL" id="CP000851">
    <property type="protein sequence ID" value="ABV86021.1"/>
    <property type="molecule type" value="Genomic_DNA"/>
</dbReference>
<dbReference type="RefSeq" id="WP_012153957.1">
    <property type="nucleotide sequence ID" value="NC_009901.1"/>
</dbReference>
<dbReference type="SMR" id="A8H0D4"/>
<dbReference type="STRING" id="398579.Spea_0694"/>
<dbReference type="KEGG" id="spl:Spea_0694"/>
<dbReference type="eggNOG" id="COG0413">
    <property type="taxonomic scope" value="Bacteria"/>
</dbReference>
<dbReference type="HOGENOM" id="CLU_036645_1_0_6"/>
<dbReference type="OrthoDB" id="9781789at2"/>
<dbReference type="UniPathway" id="UPA00028">
    <property type="reaction ID" value="UER00003"/>
</dbReference>
<dbReference type="Proteomes" id="UP000002608">
    <property type="component" value="Chromosome"/>
</dbReference>
<dbReference type="GO" id="GO:0005737">
    <property type="term" value="C:cytoplasm"/>
    <property type="evidence" value="ECO:0007669"/>
    <property type="project" value="UniProtKB-SubCell"/>
</dbReference>
<dbReference type="GO" id="GO:0003864">
    <property type="term" value="F:3-methyl-2-oxobutanoate hydroxymethyltransferase activity"/>
    <property type="evidence" value="ECO:0007669"/>
    <property type="project" value="UniProtKB-UniRule"/>
</dbReference>
<dbReference type="GO" id="GO:0000287">
    <property type="term" value="F:magnesium ion binding"/>
    <property type="evidence" value="ECO:0007669"/>
    <property type="project" value="TreeGrafter"/>
</dbReference>
<dbReference type="GO" id="GO:0015940">
    <property type="term" value="P:pantothenate biosynthetic process"/>
    <property type="evidence" value="ECO:0007669"/>
    <property type="project" value="UniProtKB-UniRule"/>
</dbReference>
<dbReference type="CDD" id="cd06557">
    <property type="entry name" value="KPHMT-like"/>
    <property type="match status" value="1"/>
</dbReference>
<dbReference type="FunFam" id="3.20.20.60:FF:000003">
    <property type="entry name" value="3-methyl-2-oxobutanoate hydroxymethyltransferase"/>
    <property type="match status" value="1"/>
</dbReference>
<dbReference type="Gene3D" id="3.20.20.60">
    <property type="entry name" value="Phosphoenolpyruvate-binding domains"/>
    <property type="match status" value="1"/>
</dbReference>
<dbReference type="HAMAP" id="MF_00156">
    <property type="entry name" value="PanB"/>
    <property type="match status" value="1"/>
</dbReference>
<dbReference type="InterPro" id="IPR003700">
    <property type="entry name" value="Pantoate_hydroxy_MeTrfase"/>
</dbReference>
<dbReference type="InterPro" id="IPR015813">
    <property type="entry name" value="Pyrv/PenolPyrv_kinase-like_dom"/>
</dbReference>
<dbReference type="InterPro" id="IPR040442">
    <property type="entry name" value="Pyrv_kinase-like_dom_sf"/>
</dbReference>
<dbReference type="NCBIfam" id="TIGR00222">
    <property type="entry name" value="panB"/>
    <property type="match status" value="1"/>
</dbReference>
<dbReference type="NCBIfam" id="NF001452">
    <property type="entry name" value="PRK00311.1"/>
    <property type="match status" value="1"/>
</dbReference>
<dbReference type="PANTHER" id="PTHR20881">
    <property type="entry name" value="3-METHYL-2-OXOBUTANOATE HYDROXYMETHYLTRANSFERASE"/>
    <property type="match status" value="1"/>
</dbReference>
<dbReference type="PANTHER" id="PTHR20881:SF0">
    <property type="entry name" value="3-METHYL-2-OXOBUTANOATE HYDROXYMETHYLTRANSFERASE"/>
    <property type="match status" value="1"/>
</dbReference>
<dbReference type="Pfam" id="PF02548">
    <property type="entry name" value="Pantoate_transf"/>
    <property type="match status" value="1"/>
</dbReference>
<dbReference type="PIRSF" id="PIRSF000388">
    <property type="entry name" value="Pantoate_hydroxy_MeTrfase"/>
    <property type="match status" value="1"/>
</dbReference>
<dbReference type="SUPFAM" id="SSF51621">
    <property type="entry name" value="Phosphoenolpyruvate/pyruvate domain"/>
    <property type="match status" value="1"/>
</dbReference>
<evidence type="ECO:0000255" key="1">
    <source>
        <dbReference type="HAMAP-Rule" id="MF_00156"/>
    </source>
</evidence>
<sequence length="264" mass="28289">MSKITSSTLRTFKQEGKKFTALTAYDASFAGAFDSEGIDVLLVGDSMGMVLQGHSDTLPVTVEEIAYHTRCVRRGIERALLIADMPFMSYATPEQTMINATTLMQAGANMVKVEGGKWLLESVAMLTERGIPVCAHLGLTPQSVHVFGGFKVQGRDADNAQRILDEAKALEAAGAQLLVVECIPAPLAKAITDALTIPVIGIGAGKDTDGQILVMHDVLGISSGYIPRFSKNYLKQTGEIRAAVRAYIDEVAQGIFPGSEHTFN</sequence>
<feature type="chain" id="PRO_1000076832" description="3-methyl-2-oxobutanoate hydroxymethyltransferase">
    <location>
        <begin position="1"/>
        <end position="264"/>
    </location>
</feature>
<feature type="active site" description="Proton acceptor" evidence="1">
    <location>
        <position position="181"/>
    </location>
</feature>
<feature type="binding site" evidence="1">
    <location>
        <begin position="45"/>
        <end position="46"/>
    </location>
    <ligand>
        <name>3-methyl-2-oxobutanoate</name>
        <dbReference type="ChEBI" id="CHEBI:11851"/>
    </ligand>
</feature>
<feature type="binding site" evidence="1">
    <location>
        <position position="45"/>
    </location>
    <ligand>
        <name>Mg(2+)</name>
        <dbReference type="ChEBI" id="CHEBI:18420"/>
    </ligand>
</feature>
<feature type="binding site" evidence="1">
    <location>
        <position position="84"/>
    </location>
    <ligand>
        <name>3-methyl-2-oxobutanoate</name>
        <dbReference type="ChEBI" id="CHEBI:11851"/>
    </ligand>
</feature>
<feature type="binding site" evidence="1">
    <location>
        <position position="84"/>
    </location>
    <ligand>
        <name>Mg(2+)</name>
        <dbReference type="ChEBI" id="CHEBI:18420"/>
    </ligand>
</feature>
<feature type="binding site" evidence="1">
    <location>
        <position position="112"/>
    </location>
    <ligand>
        <name>3-methyl-2-oxobutanoate</name>
        <dbReference type="ChEBI" id="CHEBI:11851"/>
    </ligand>
</feature>
<feature type="binding site" evidence="1">
    <location>
        <position position="114"/>
    </location>
    <ligand>
        <name>Mg(2+)</name>
        <dbReference type="ChEBI" id="CHEBI:18420"/>
    </ligand>
</feature>
<name>PANB_SHEPA</name>
<accession>A8H0D4</accession>
<comment type="function">
    <text evidence="1">Catalyzes the reversible reaction in which hydroxymethyl group from 5,10-methylenetetrahydrofolate is transferred onto alpha-ketoisovalerate to form ketopantoate.</text>
</comment>
<comment type="catalytic activity">
    <reaction evidence="1">
        <text>3-methyl-2-oxobutanoate + (6R)-5,10-methylene-5,6,7,8-tetrahydrofolate + H2O = 2-dehydropantoate + (6S)-5,6,7,8-tetrahydrofolate</text>
        <dbReference type="Rhea" id="RHEA:11824"/>
        <dbReference type="ChEBI" id="CHEBI:11561"/>
        <dbReference type="ChEBI" id="CHEBI:11851"/>
        <dbReference type="ChEBI" id="CHEBI:15377"/>
        <dbReference type="ChEBI" id="CHEBI:15636"/>
        <dbReference type="ChEBI" id="CHEBI:57453"/>
        <dbReference type="EC" id="2.1.2.11"/>
    </reaction>
</comment>
<comment type="cofactor">
    <cofactor evidence="1">
        <name>Mg(2+)</name>
        <dbReference type="ChEBI" id="CHEBI:18420"/>
    </cofactor>
    <text evidence="1">Binds 1 Mg(2+) ion per subunit.</text>
</comment>
<comment type="pathway">
    <text evidence="1">Cofactor biosynthesis; (R)-pantothenate biosynthesis; (R)-pantoate from 3-methyl-2-oxobutanoate: step 1/2.</text>
</comment>
<comment type="subunit">
    <text evidence="1">Homodecamer; pentamer of dimers.</text>
</comment>
<comment type="subcellular location">
    <subcellularLocation>
        <location evidence="1">Cytoplasm</location>
    </subcellularLocation>
</comment>
<comment type="similarity">
    <text evidence="1">Belongs to the PanB family.</text>
</comment>
<protein>
    <recommendedName>
        <fullName evidence="1">3-methyl-2-oxobutanoate hydroxymethyltransferase</fullName>
        <ecNumber evidence="1">2.1.2.11</ecNumber>
    </recommendedName>
    <alternativeName>
        <fullName evidence="1">Ketopantoate hydroxymethyltransferase</fullName>
        <shortName evidence="1">KPHMT</shortName>
    </alternativeName>
</protein>
<proteinExistence type="inferred from homology"/>
<gene>
    <name evidence="1" type="primary">panB</name>
    <name type="ordered locus">Spea_0694</name>
</gene>
<organism>
    <name type="scientific">Shewanella pealeana (strain ATCC 700345 / ANG-SQ1)</name>
    <dbReference type="NCBI Taxonomy" id="398579"/>
    <lineage>
        <taxon>Bacteria</taxon>
        <taxon>Pseudomonadati</taxon>
        <taxon>Pseudomonadota</taxon>
        <taxon>Gammaproteobacteria</taxon>
        <taxon>Alteromonadales</taxon>
        <taxon>Shewanellaceae</taxon>
        <taxon>Shewanella</taxon>
    </lineage>
</organism>
<keyword id="KW-0963">Cytoplasm</keyword>
<keyword id="KW-0460">Magnesium</keyword>
<keyword id="KW-0479">Metal-binding</keyword>
<keyword id="KW-0566">Pantothenate biosynthesis</keyword>
<keyword id="KW-1185">Reference proteome</keyword>
<keyword id="KW-0808">Transferase</keyword>
<reference key="1">
    <citation type="submission" date="2007-10" db="EMBL/GenBank/DDBJ databases">
        <title>Complete sequence of Shewanella pealeana ATCC 700345.</title>
        <authorList>
            <consortium name="US DOE Joint Genome Institute"/>
            <person name="Copeland A."/>
            <person name="Lucas S."/>
            <person name="Lapidus A."/>
            <person name="Barry K."/>
            <person name="Glavina del Rio T."/>
            <person name="Dalin E."/>
            <person name="Tice H."/>
            <person name="Pitluck S."/>
            <person name="Chertkov O."/>
            <person name="Brettin T."/>
            <person name="Bruce D."/>
            <person name="Detter J.C."/>
            <person name="Han C."/>
            <person name="Schmutz J."/>
            <person name="Larimer F."/>
            <person name="Land M."/>
            <person name="Hauser L."/>
            <person name="Kyrpides N."/>
            <person name="Kim E."/>
            <person name="Zhao J.-S.Z."/>
            <person name="Manno D."/>
            <person name="Hawari J."/>
            <person name="Richardson P."/>
        </authorList>
    </citation>
    <scope>NUCLEOTIDE SEQUENCE [LARGE SCALE GENOMIC DNA]</scope>
    <source>
        <strain>ATCC 700345 / ANG-SQ1</strain>
    </source>
</reference>